<accession>A0A7R7ZK98</accession>
<keyword id="KW-0511">Multifunctional enzyme</keyword>
<keyword id="KW-0596">Phosphopantetheine</keyword>
<keyword id="KW-0597">Phosphoprotein</keyword>
<keyword id="KW-1185">Reference proteome</keyword>
<keyword id="KW-0808">Transferase</keyword>
<proteinExistence type="inferred from homology"/>
<dbReference type="EC" id="2.3.1.-" evidence="8"/>
<dbReference type="EMBL" id="AP024417">
    <property type="protein sequence ID" value="BCR85520.1"/>
    <property type="molecule type" value="Genomic_DNA"/>
</dbReference>
<dbReference type="SMR" id="A0A7R7ZK98"/>
<dbReference type="Proteomes" id="UP000637239">
    <property type="component" value="Chromosome 2"/>
</dbReference>
<dbReference type="GO" id="GO:0004312">
    <property type="term" value="F:fatty acid synthase activity"/>
    <property type="evidence" value="ECO:0007669"/>
    <property type="project" value="TreeGrafter"/>
</dbReference>
<dbReference type="GO" id="GO:0031177">
    <property type="term" value="F:phosphopantetheine binding"/>
    <property type="evidence" value="ECO:0007669"/>
    <property type="project" value="InterPro"/>
</dbReference>
<dbReference type="GO" id="GO:0006633">
    <property type="term" value="P:fatty acid biosynthetic process"/>
    <property type="evidence" value="ECO:0007669"/>
    <property type="project" value="TreeGrafter"/>
</dbReference>
<dbReference type="GO" id="GO:0044550">
    <property type="term" value="P:secondary metabolite biosynthetic process"/>
    <property type="evidence" value="ECO:0007669"/>
    <property type="project" value="TreeGrafter"/>
</dbReference>
<dbReference type="CDD" id="cd00833">
    <property type="entry name" value="PKS"/>
    <property type="match status" value="1"/>
</dbReference>
<dbReference type="FunFam" id="3.40.366.10:FF:000002">
    <property type="entry name" value="Probable polyketide synthase 2"/>
    <property type="match status" value="1"/>
</dbReference>
<dbReference type="FunFam" id="1.10.1200.10:FF:000011">
    <property type="entry name" value="Sterigmatocystin biosynthesis polyketide synthase"/>
    <property type="match status" value="1"/>
</dbReference>
<dbReference type="FunFam" id="3.10.129.110:FF:000001">
    <property type="entry name" value="Sterigmatocystin biosynthesis polyketide synthase"/>
    <property type="match status" value="1"/>
</dbReference>
<dbReference type="Gene3D" id="3.30.70.3290">
    <property type="match status" value="1"/>
</dbReference>
<dbReference type="Gene3D" id="3.40.47.10">
    <property type="match status" value="1"/>
</dbReference>
<dbReference type="Gene3D" id="1.10.1200.10">
    <property type="entry name" value="ACP-like"/>
    <property type="match status" value="1"/>
</dbReference>
<dbReference type="Gene3D" id="3.40.366.10">
    <property type="entry name" value="Malonyl-Coenzyme A Acyl Carrier Protein, domain 2"/>
    <property type="match status" value="2"/>
</dbReference>
<dbReference type="Gene3D" id="3.10.129.110">
    <property type="entry name" value="Polyketide synthase dehydratase"/>
    <property type="match status" value="1"/>
</dbReference>
<dbReference type="InterPro" id="IPR001227">
    <property type="entry name" value="Ac_transferase_dom_sf"/>
</dbReference>
<dbReference type="InterPro" id="IPR036736">
    <property type="entry name" value="ACP-like_sf"/>
</dbReference>
<dbReference type="InterPro" id="IPR014043">
    <property type="entry name" value="Acyl_transferase_dom"/>
</dbReference>
<dbReference type="InterPro" id="IPR016035">
    <property type="entry name" value="Acyl_Trfase/lysoPLipase"/>
</dbReference>
<dbReference type="InterPro" id="IPR014031">
    <property type="entry name" value="Ketoacyl_synth_C"/>
</dbReference>
<dbReference type="InterPro" id="IPR014030">
    <property type="entry name" value="Ketoacyl_synth_N"/>
</dbReference>
<dbReference type="InterPro" id="IPR016036">
    <property type="entry name" value="Malonyl_transacylase_ACP-bd"/>
</dbReference>
<dbReference type="InterPro" id="IPR020841">
    <property type="entry name" value="PKS_Beta-ketoAc_synthase_dom"/>
</dbReference>
<dbReference type="InterPro" id="IPR042104">
    <property type="entry name" value="PKS_dehydratase_sf"/>
</dbReference>
<dbReference type="InterPro" id="IPR049900">
    <property type="entry name" value="PKS_mFAS_DH"/>
</dbReference>
<dbReference type="InterPro" id="IPR050091">
    <property type="entry name" value="PKS_NRPS_Biosynth_Enz"/>
</dbReference>
<dbReference type="InterPro" id="IPR020806">
    <property type="entry name" value="PKS_PP-bd"/>
</dbReference>
<dbReference type="InterPro" id="IPR009081">
    <property type="entry name" value="PP-bd_ACP"/>
</dbReference>
<dbReference type="InterPro" id="IPR030918">
    <property type="entry name" value="PT_fungal_PKS"/>
</dbReference>
<dbReference type="InterPro" id="IPR032088">
    <property type="entry name" value="SAT"/>
</dbReference>
<dbReference type="InterPro" id="IPR016039">
    <property type="entry name" value="Thiolase-like"/>
</dbReference>
<dbReference type="NCBIfam" id="TIGR04532">
    <property type="entry name" value="PT_fungal_PKS"/>
    <property type="match status" value="1"/>
</dbReference>
<dbReference type="PANTHER" id="PTHR43775">
    <property type="entry name" value="FATTY ACID SYNTHASE"/>
    <property type="match status" value="1"/>
</dbReference>
<dbReference type="PANTHER" id="PTHR43775:SF37">
    <property type="entry name" value="SI:DKEY-61P9.11"/>
    <property type="match status" value="1"/>
</dbReference>
<dbReference type="Pfam" id="PF00698">
    <property type="entry name" value="Acyl_transf_1"/>
    <property type="match status" value="1"/>
</dbReference>
<dbReference type="Pfam" id="PF22621">
    <property type="entry name" value="CurL-like_PKS_C"/>
    <property type="match status" value="1"/>
</dbReference>
<dbReference type="Pfam" id="PF00109">
    <property type="entry name" value="ketoacyl-synt"/>
    <property type="match status" value="1"/>
</dbReference>
<dbReference type="Pfam" id="PF02801">
    <property type="entry name" value="Ketoacyl-synt_C"/>
    <property type="match status" value="1"/>
</dbReference>
<dbReference type="Pfam" id="PF00550">
    <property type="entry name" value="PP-binding"/>
    <property type="match status" value="1"/>
</dbReference>
<dbReference type="Pfam" id="PF16073">
    <property type="entry name" value="SAT"/>
    <property type="match status" value="1"/>
</dbReference>
<dbReference type="SMART" id="SM00827">
    <property type="entry name" value="PKS_AT"/>
    <property type="match status" value="1"/>
</dbReference>
<dbReference type="SMART" id="SM00825">
    <property type="entry name" value="PKS_KS"/>
    <property type="match status" value="1"/>
</dbReference>
<dbReference type="SMART" id="SM00823">
    <property type="entry name" value="PKS_PP"/>
    <property type="match status" value="1"/>
</dbReference>
<dbReference type="SUPFAM" id="SSF47336">
    <property type="entry name" value="ACP-like"/>
    <property type="match status" value="1"/>
</dbReference>
<dbReference type="SUPFAM" id="SSF52151">
    <property type="entry name" value="FabD/lysophospholipase-like"/>
    <property type="match status" value="1"/>
</dbReference>
<dbReference type="SUPFAM" id="SSF55048">
    <property type="entry name" value="Probable ACP-binding domain of malonyl-CoA ACP transacylase"/>
    <property type="match status" value="1"/>
</dbReference>
<dbReference type="SUPFAM" id="SSF53901">
    <property type="entry name" value="Thiolase-like"/>
    <property type="match status" value="1"/>
</dbReference>
<dbReference type="PROSITE" id="PS50075">
    <property type="entry name" value="CARRIER"/>
    <property type="match status" value="1"/>
</dbReference>
<dbReference type="PROSITE" id="PS52004">
    <property type="entry name" value="KS3_2"/>
    <property type="match status" value="1"/>
</dbReference>
<dbReference type="PROSITE" id="PS52019">
    <property type="entry name" value="PKS_MFAS_DH"/>
    <property type="match status" value="1"/>
</dbReference>
<protein>
    <recommendedName>
        <fullName evidence="7">Atrochrysone carboxylic acid synthase</fullName>
        <shortName evidence="7">ACAS</shortName>
        <ecNumber evidence="8">2.3.1.-</ecNumber>
    </recommendedName>
    <alternativeName>
        <fullName evidence="7">Non-reducing polyketide synthase AcPKS</fullName>
    </alternativeName>
    <alternativeName>
        <fullName evidence="7">Physcion biosynthesis cluster O-methyltransferase polyketide synthase</fullName>
    </alternativeName>
</protein>
<comment type="function">
    <text evidence="6 8">Non-reducing polyketide synthase; part of the gene cluster that mediates the biosynthesis of physcion, a natural anthraquinone fungicide that can prevent plant fungal infections (PubMed:36648527). The pathway begins with the polyketide synthase AcPKS that condenses 8 malonyl-CoA units to synthesize atrochrysone thioester which is released from the synthase by the atrochrysone carboxyl ACP thioesterase AcTE that breaks the thioester bond and leads to free atrochrysone carboxylic acid (Probable). Spontaneous decarboxylation of atrochrysone carboxylic acid leads to the formation of atrochrysone. Then, atrochrysone undergoes spontaneous dehydration and oxidation, giving the products emodin anthrone and emodin. The O-methyltransferase AcOMT then methylates the C-6 hydroxyl of emodin to form physcion (Probable).</text>
</comment>
<comment type="catalytic activity">
    <reaction evidence="8">
        <text>holo-[ACP] + 8 malonyl-CoA + 8 H(+) = atrochrysone carboxyl-[ACP] + 8 CO2 + 8 CoA + 2 H2O</text>
        <dbReference type="Rhea" id="RHEA:64232"/>
        <dbReference type="Rhea" id="RHEA-COMP:9685"/>
        <dbReference type="Rhea" id="RHEA-COMP:16552"/>
        <dbReference type="ChEBI" id="CHEBI:15377"/>
        <dbReference type="ChEBI" id="CHEBI:15378"/>
        <dbReference type="ChEBI" id="CHEBI:16526"/>
        <dbReference type="ChEBI" id="CHEBI:57287"/>
        <dbReference type="ChEBI" id="CHEBI:57384"/>
        <dbReference type="ChEBI" id="CHEBI:64479"/>
        <dbReference type="ChEBI" id="CHEBI:149712"/>
    </reaction>
    <physiologicalReaction direction="left-to-right" evidence="8">
        <dbReference type="Rhea" id="RHEA:64233"/>
    </physiologicalReaction>
</comment>
<comment type="pathway">
    <text evidence="8">Secondary metabolite biosynthesis.</text>
</comment>
<comment type="domain">
    <text evidence="8">Multidomain protein; including a starter unit:ACP transacylase (SAT) that selects the starter unit; a ketosynthase (KS) that catalyzes repeated decarboxylative condensation to elongate the polyketide backbone; a malonyl-CoA:ACP transacylase (MAT) that selects and transfers the extender unit malonyl-CoA; a product template (PT) domain that controls the immediate cyclization regioselectivity of the reactive polyketide backbone; and an acyl-carrier protein (ACP) that serves as the tether of the growing and completed polyketide via its phosphopantetheinyl arm.</text>
</comment>
<reference key="1">
    <citation type="journal article" date="2021" name="Microbiol. Resour. Announc.">
        <title>Chromosome-Level genome sequence of Aspergillus chevalieri M1, isolated from katsuobushi.</title>
        <authorList>
            <person name="Kadooka C."/>
            <person name="Mori K."/>
            <person name="Okutsu K."/>
            <person name="Yoshizaki Y."/>
            <person name="Takamine K."/>
            <person name="Tashiro K."/>
            <person name="Tamaki H."/>
            <person name="Futagami T."/>
        </authorList>
    </citation>
    <scope>NUCLEOTIDE SEQUENCE [LARGE SCALE GENOMIC DNA]</scope>
    <source>
        <strain>M1</strain>
    </source>
</reference>
<reference key="2">
    <citation type="journal article" date="2023" name="Appl. Microbiol. Biotechnol.">
        <title>Mining an O-methyltransferase for de novo biosynthesis of physcion in Aspergillus nidulans.</title>
        <authorList>
            <person name="Yao Y."/>
            <person name="Yang E."/>
            <person name="Pan Y."/>
            <person name="Shu X."/>
            <person name="Liu G."/>
        </authorList>
    </citation>
    <scope>FUNCTION</scope>
    <scope>PATHWAY</scope>
</reference>
<evidence type="ECO:0000255" key="1"/>
<evidence type="ECO:0000255" key="2">
    <source>
        <dbReference type="PROSITE-ProRule" id="PRU00258"/>
    </source>
</evidence>
<evidence type="ECO:0000255" key="3">
    <source>
        <dbReference type="PROSITE-ProRule" id="PRU01348"/>
    </source>
</evidence>
<evidence type="ECO:0000255" key="4">
    <source>
        <dbReference type="PROSITE-ProRule" id="PRU01363"/>
    </source>
</evidence>
<evidence type="ECO:0000256" key="5">
    <source>
        <dbReference type="SAM" id="MobiDB-lite"/>
    </source>
</evidence>
<evidence type="ECO:0000269" key="6">
    <source>
    </source>
</evidence>
<evidence type="ECO:0000303" key="7">
    <source>
    </source>
</evidence>
<evidence type="ECO:0000305" key="8">
    <source>
    </source>
</evidence>
<feature type="chain" id="PRO_0000459058" description="Atrochrysone carboxylic acid synthase">
    <location>
        <begin position="1"/>
        <end position="1775"/>
    </location>
</feature>
<feature type="domain" description="Starter acyltransferase (SAT)" evidence="1">
    <location>
        <begin position="35"/>
        <end position="262"/>
    </location>
</feature>
<feature type="domain" description="Ketosynthase family 3 (KS3)" evidence="3">
    <location>
        <begin position="400"/>
        <end position="833"/>
    </location>
</feature>
<feature type="domain" description="Malonyl-CoA:ACP transacylase (MAT)" evidence="1">
    <location>
        <begin position="934"/>
        <end position="1244"/>
    </location>
</feature>
<feature type="domain" description="PKS/mFAS DH" evidence="4">
    <location>
        <begin position="1317"/>
        <end position="1626"/>
    </location>
</feature>
<feature type="domain" description="Carrier" evidence="2">
    <location>
        <begin position="1697"/>
        <end position="1774"/>
    </location>
</feature>
<feature type="region of interest" description="Product template (PT) domain" evidence="1">
    <location>
        <begin position="1313"/>
        <end position="1631"/>
    </location>
</feature>
<feature type="region of interest" description="N-terminal hotdog fold" evidence="4">
    <location>
        <begin position="1317"/>
        <end position="1451"/>
    </location>
</feature>
<feature type="region of interest" description="C-terminal hotdog fold" evidence="4">
    <location>
        <begin position="1480"/>
        <end position="1626"/>
    </location>
</feature>
<feature type="region of interest" description="Disordered" evidence="5">
    <location>
        <begin position="1671"/>
        <end position="1697"/>
    </location>
</feature>
<feature type="compositionally biased region" description="Low complexity" evidence="5">
    <location>
        <begin position="1688"/>
        <end position="1697"/>
    </location>
</feature>
<feature type="active site" description="For beta-ketoacyl synthase activity" evidence="3">
    <location>
        <position position="573"/>
    </location>
</feature>
<feature type="active site" description="For beta-ketoacyl synthase activity" evidence="3">
    <location>
        <position position="708"/>
    </location>
</feature>
<feature type="active site" description="For beta-ketoacyl synthase activity" evidence="3">
    <location>
        <position position="750"/>
    </location>
</feature>
<feature type="active site" description="Proton acceptor; for dehydratase activity" evidence="4">
    <location>
        <position position="1349"/>
    </location>
</feature>
<feature type="active site" description="Proton donor; for dehydratase activity" evidence="4">
    <location>
        <position position="1537"/>
    </location>
</feature>
<feature type="modified residue" description="O-(pantetheine 4'-phosphoryl)serine" evidence="2">
    <location>
        <position position="1734"/>
    </location>
</feature>
<sequence>MDTPSSSADVVNDHHYRLVYFSNELPSDEQIGAHLRRLQALSKDRRHPILKVFLDDATEVLREELRKLPSHLLSLIAPFESIIDFAYQFGLRTGPFGGSTEGVSTCLIQLGTYISYHECPTNEPLTSPHGTLVALGSGLLAAAAVSFASRLPDLVKLGSEAIRIAFRMGLRVDQASQRLETRRAEGPAESWAYVFSELSEDEVQKELATMNASLNFPAPSQIFVSAVSPGSVTISGPPSRLKTLVRSSELLRYAKWASLPIFNGLCHTSHAYTHADAEDIVSAMDLPTNSSYIPHAPLLSTRNGQPFAAHTPAQLFEDVIFELLTGTIRWDTVTATLHDRVALHFVPEVVVKALGAPNALKGFNEAVQAHADPVRVITEDVLAQSLATPLPVRAPRDPKDSKIAIVGMSCRLPGGAVSNQSFWDLLEKGLDVHRRIPADRFDVDTHWDPTGQNPNASKTPFGCFIDDPALFDAGFFNMSPREAEQTDPMHRLALVTAHEALEQAGFVPNRTPSTNIERVGVFYGQASDDYREVNAGQEIGTYYIPGGNRAFAPGRINYFYKFGGPSFSCDTACSSSLATVQIACTTLWSGDADMVIAGGVNVLTNSDGFAGLCNGHFLTQTGNCKTWDAGADGYCRADGIGSVVMKRLEDAIADNDNILATVLSAATNQSAKAVSITHPHAGAQASLYKRVMDRAGVDPLDVSYVELHGTGTQAGDATEMESVTQVFAPMGPRRRTEPLHIGAVKSNIGHGEAAAGIAALIKVLLMYKKRSIPPHTGIKTELSPVLKKFLDKKRNIHIAFEQTPWKPVYNDTRYAVVNNFSAAGGNTTMLLEEAPVKEIQDDGDDREKHVVAVSAKSKVSLKGNLEALLAYLEENPETSLSDLAYTTLARRMHYNHRIAFSASSIDHVKKQLRYHIDSEEQVRPVPSNPPAVAFAFTGQGAFYPGMGAQLYNSVPSFRDHITHLDSLCQQHGFPSILPVIENIGAETQEEPAPIVTQLTITCLEIALTKYWASLGITPSVVVGASLGEYPALHAAGVLSASDTIFLVGQRAQQLEKHCQLRSHGMMAVRASVEQITECLGDQPYEVACINAPQDTVIDGLQADIASAREKLQAQGYKCHQLDVPYAFHSSQMDPALDSYEQIASSVTFHAPQVPVISPLLSDVVFDAKSIHAQYMRRATREPVNFVGALQAAQEIGIIDHNTVWVEAGPHPVLVSFIRNCLPEVKRLVPTLRRNENNWNTLADSLAGLHSDGLTLQWNEVHRPFEASLRLLDLPSYSWNEKRYWIQYRGTWTLTKGKEVSQPVPSSAVSTLTTSSIHQVLQEDVTGSTATFVARSNLMHPDLFEAANGHRMNDCGVATSSIHGDIAFTIADHLYKKITNTSAPGINITNLIVLQGLVAQKFSKADQLFELRATADLTTSPATTTIHWYNVTDGITSPEHFASAVVEYGDANVWLSQWRRLSHLVNSRIASLERMATEGKAAVLPRNMAYRLFNNLVDYADKYRGIQSAIMHEYEAMANVTLTTQGSGTWTVPPYFTDPVAHLAGLVMNGSDASNTIDYFYVTPGWAGLRFAKPLVKGGKYQSYVQMTPIEGQAGFWNGDVYVLQDGEIIGLVEKITFRRFPRSLLPTFFSPPDVAKPLHAAAPAVPVKPAAPAPVPVSAPAEAFKSAAPKTAAPVPAPAPVPAKRAEPAPAAAQAAATQNPTITGALDLIAKESALELSQLTDDAAFATLGVDSLMSLVLAEKFTSQLGIEVKSSIFMECETVGELKTYIEETFC</sequence>
<organism>
    <name type="scientific">Aspergillus chevalieri</name>
    <name type="common">Eurotium chevalieri</name>
    <dbReference type="NCBI Taxonomy" id="182096"/>
    <lineage>
        <taxon>Eukaryota</taxon>
        <taxon>Fungi</taxon>
        <taxon>Dikarya</taxon>
        <taxon>Ascomycota</taxon>
        <taxon>Pezizomycotina</taxon>
        <taxon>Eurotiomycetes</taxon>
        <taxon>Eurotiomycetidae</taxon>
        <taxon>Eurotiales</taxon>
        <taxon>Aspergillaceae</taxon>
        <taxon>Aspergillus</taxon>
        <taxon>Aspergillus subgen. Aspergillus</taxon>
    </lineage>
</organism>
<name>ACPKS_ASPCH</name>
<gene>
    <name evidence="7" type="primary">AcPKS</name>
    <name type="ORF">ACHE_20978A</name>
</gene>